<organism>
    <name type="scientific">Persephonella marina (strain DSM 14350 / EX-H1)</name>
    <dbReference type="NCBI Taxonomy" id="123214"/>
    <lineage>
        <taxon>Bacteria</taxon>
        <taxon>Pseudomonadati</taxon>
        <taxon>Aquificota</taxon>
        <taxon>Aquificia</taxon>
        <taxon>Aquificales</taxon>
        <taxon>Hydrogenothermaceae</taxon>
        <taxon>Persephonella</taxon>
    </lineage>
</organism>
<feature type="chain" id="PRO_1000190695" description="4-diphosphocytidyl-2-C-methyl-D-erythritol kinase">
    <location>
        <begin position="1"/>
        <end position="274"/>
    </location>
</feature>
<feature type="active site" evidence="1">
    <location>
        <position position="9"/>
    </location>
</feature>
<feature type="active site" evidence="1">
    <location>
        <position position="133"/>
    </location>
</feature>
<feature type="binding site" evidence="1">
    <location>
        <begin position="91"/>
        <end position="101"/>
    </location>
    <ligand>
        <name>ATP</name>
        <dbReference type="ChEBI" id="CHEBI:30616"/>
    </ligand>
</feature>
<name>ISPE_PERMH</name>
<comment type="function">
    <text evidence="1">Catalyzes the phosphorylation of the position 2 hydroxy group of 4-diphosphocytidyl-2C-methyl-D-erythritol.</text>
</comment>
<comment type="catalytic activity">
    <reaction evidence="1">
        <text>4-CDP-2-C-methyl-D-erythritol + ATP = 4-CDP-2-C-methyl-D-erythritol 2-phosphate + ADP + H(+)</text>
        <dbReference type="Rhea" id="RHEA:18437"/>
        <dbReference type="ChEBI" id="CHEBI:15378"/>
        <dbReference type="ChEBI" id="CHEBI:30616"/>
        <dbReference type="ChEBI" id="CHEBI:57823"/>
        <dbReference type="ChEBI" id="CHEBI:57919"/>
        <dbReference type="ChEBI" id="CHEBI:456216"/>
        <dbReference type="EC" id="2.7.1.148"/>
    </reaction>
</comment>
<comment type="pathway">
    <text evidence="1">Isoprenoid biosynthesis; isopentenyl diphosphate biosynthesis via DXP pathway; isopentenyl diphosphate from 1-deoxy-D-xylulose 5-phosphate: step 3/6.</text>
</comment>
<comment type="similarity">
    <text evidence="1">Belongs to the GHMP kinase family. IspE subfamily.</text>
</comment>
<dbReference type="EC" id="2.7.1.148" evidence="1"/>
<dbReference type="EMBL" id="CP001230">
    <property type="protein sequence ID" value="ACO04427.1"/>
    <property type="molecule type" value="Genomic_DNA"/>
</dbReference>
<dbReference type="RefSeq" id="WP_012676665.1">
    <property type="nucleotide sequence ID" value="NC_012440.1"/>
</dbReference>
<dbReference type="SMR" id="C0QQW3"/>
<dbReference type="STRING" id="123214.PERMA_1286"/>
<dbReference type="PaxDb" id="123214-PERMA_1286"/>
<dbReference type="KEGG" id="pmx:PERMA_1286"/>
<dbReference type="eggNOG" id="COG1947">
    <property type="taxonomic scope" value="Bacteria"/>
</dbReference>
<dbReference type="HOGENOM" id="CLU_053057_2_0_0"/>
<dbReference type="OrthoDB" id="9809438at2"/>
<dbReference type="UniPathway" id="UPA00056">
    <property type="reaction ID" value="UER00094"/>
</dbReference>
<dbReference type="Proteomes" id="UP000001366">
    <property type="component" value="Chromosome"/>
</dbReference>
<dbReference type="GO" id="GO:0050515">
    <property type="term" value="F:4-(cytidine 5'-diphospho)-2-C-methyl-D-erythritol kinase activity"/>
    <property type="evidence" value="ECO:0007669"/>
    <property type="project" value="UniProtKB-UniRule"/>
</dbReference>
<dbReference type="GO" id="GO:0005524">
    <property type="term" value="F:ATP binding"/>
    <property type="evidence" value="ECO:0007669"/>
    <property type="project" value="UniProtKB-UniRule"/>
</dbReference>
<dbReference type="GO" id="GO:0019288">
    <property type="term" value="P:isopentenyl diphosphate biosynthetic process, methylerythritol 4-phosphate pathway"/>
    <property type="evidence" value="ECO:0007669"/>
    <property type="project" value="UniProtKB-UniRule"/>
</dbReference>
<dbReference type="GO" id="GO:0016114">
    <property type="term" value="P:terpenoid biosynthetic process"/>
    <property type="evidence" value="ECO:0007669"/>
    <property type="project" value="InterPro"/>
</dbReference>
<dbReference type="Gene3D" id="3.30.230.10">
    <property type="match status" value="1"/>
</dbReference>
<dbReference type="Gene3D" id="3.30.70.890">
    <property type="entry name" value="GHMP kinase, C-terminal domain"/>
    <property type="match status" value="1"/>
</dbReference>
<dbReference type="HAMAP" id="MF_00061">
    <property type="entry name" value="IspE"/>
    <property type="match status" value="1"/>
</dbReference>
<dbReference type="InterPro" id="IPR013750">
    <property type="entry name" value="GHMP_kinase_C_dom"/>
</dbReference>
<dbReference type="InterPro" id="IPR036554">
    <property type="entry name" value="GHMP_kinase_C_sf"/>
</dbReference>
<dbReference type="InterPro" id="IPR006204">
    <property type="entry name" value="GHMP_kinase_N_dom"/>
</dbReference>
<dbReference type="InterPro" id="IPR004424">
    <property type="entry name" value="IspE"/>
</dbReference>
<dbReference type="InterPro" id="IPR020568">
    <property type="entry name" value="Ribosomal_Su5_D2-typ_SF"/>
</dbReference>
<dbReference type="InterPro" id="IPR014721">
    <property type="entry name" value="Ribsml_uS5_D2-typ_fold_subgr"/>
</dbReference>
<dbReference type="NCBIfam" id="TIGR00154">
    <property type="entry name" value="ispE"/>
    <property type="match status" value="1"/>
</dbReference>
<dbReference type="NCBIfam" id="NF011205">
    <property type="entry name" value="PRK14611.1"/>
    <property type="match status" value="1"/>
</dbReference>
<dbReference type="PANTHER" id="PTHR43527">
    <property type="entry name" value="4-DIPHOSPHOCYTIDYL-2-C-METHYL-D-ERYTHRITOL KINASE, CHLOROPLASTIC"/>
    <property type="match status" value="1"/>
</dbReference>
<dbReference type="PANTHER" id="PTHR43527:SF2">
    <property type="entry name" value="4-DIPHOSPHOCYTIDYL-2-C-METHYL-D-ERYTHRITOL KINASE, CHLOROPLASTIC"/>
    <property type="match status" value="1"/>
</dbReference>
<dbReference type="Pfam" id="PF08544">
    <property type="entry name" value="GHMP_kinases_C"/>
    <property type="match status" value="1"/>
</dbReference>
<dbReference type="Pfam" id="PF00288">
    <property type="entry name" value="GHMP_kinases_N"/>
    <property type="match status" value="1"/>
</dbReference>
<dbReference type="PIRSF" id="PIRSF010376">
    <property type="entry name" value="IspE"/>
    <property type="match status" value="1"/>
</dbReference>
<dbReference type="SUPFAM" id="SSF55060">
    <property type="entry name" value="GHMP Kinase, C-terminal domain"/>
    <property type="match status" value="1"/>
</dbReference>
<dbReference type="SUPFAM" id="SSF54211">
    <property type="entry name" value="Ribosomal protein S5 domain 2-like"/>
    <property type="match status" value="1"/>
</dbReference>
<keyword id="KW-0067">ATP-binding</keyword>
<keyword id="KW-0414">Isoprene biosynthesis</keyword>
<keyword id="KW-0418">Kinase</keyword>
<keyword id="KW-0547">Nucleotide-binding</keyword>
<keyword id="KW-1185">Reference proteome</keyword>
<keyword id="KW-0808">Transferase</keyword>
<accession>C0QQW3</accession>
<protein>
    <recommendedName>
        <fullName evidence="1">4-diphosphocytidyl-2-C-methyl-D-erythritol kinase</fullName>
        <shortName evidence="1">CMK</shortName>
        <ecNumber evidence="1">2.7.1.148</ecNumber>
    </recommendedName>
    <alternativeName>
        <fullName evidence="1">4-(cytidine-5'-diphospho)-2-C-methyl-D-erythritol kinase</fullName>
    </alternativeName>
</protein>
<evidence type="ECO:0000255" key="1">
    <source>
        <dbReference type="HAMAP-Rule" id="MF_00061"/>
    </source>
</evidence>
<proteinExistence type="inferred from homology"/>
<sequence length="274" mass="30688">MRVLRSPAKVNLGLWVTGKRADGYHDIVTVFHTVDFHDRIFIKRSHSLKIKTSSPLIPEGEENIVYKALKRFEEWTGVSPEVEVFIEKNIPAGAGLGGGSSNAAVVLKEVNSMYGEILSEKELSELASTIGADVPFFLKGGLAVAEGIGDKLRFLDKKIEREIFIIYPAVHVSTKEIYSKVTPDILTKKEDLHIIDSLLDDFEYFLENIENTLGEIALESYPQMREVYNTLEYLGYKPFVSGSGSSIFAFGKPEAEIEKICQVKGWKLIKTVLR</sequence>
<reference key="1">
    <citation type="journal article" date="2009" name="J. Bacteriol.">
        <title>Complete and draft genome sequences of six members of the Aquificales.</title>
        <authorList>
            <person name="Reysenbach A.-L."/>
            <person name="Hamamura N."/>
            <person name="Podar M."/>
            <person name="Griffiths E."/>
            <person name="Ferreira S."/>
            <person name="Hochstein R."/>
            <person name="Heidelberg J."/>
            <person name="Johnson J."/>
            <person name="Mead D."/>
            <person name="Pohorille A."/>
            <person name="Sarmiento M."/>
            <person name="Schweighofer K."/>
            <person name="Seshadri R."/>
            <person name="Voytek M.A."/>
        </authorList>
    </citation>
    <scope>NUCLEOTIDE SEQUENCE [LARGE SCALE GENOMIC DNA]</scope>
    <source>
        <strain>DSM 14350 / EX-H1</strain>
    </source>
</reference>
<gene>
    <name evidence="1" type="primary">ispE</name>
    <name type="ordered locus">PERMA_1286</name>
</gene>